<gene>
    <name evidence="1" type="primary">pyrB</name>
    <name type="ordered locus">Anae109_2193</name>
</gene>
<dbReference type="EC" id="2.1.3.2" evidence="1"/>
<dbReference type="EMBL" id="CP000769">
    <property type="protein sequence ID" value="ABS26395.1"/>
    <property type="molecule type" value="Genomic_DNA"/>
</dbReference>
<dbReference type="RefSeq" id="WP_012096977.1">
    <property type="nucleotide sequence ID" value="NC_009675.1"/>
</dbReference>
<dbReference type="SMR" id="A7HCE9"/>
<dbReference type="STRING" id="404589.Anae109_2193"/>
<dbReference type="KEGG" id="afw:Anae109_2193"/>
<dbReference type="eggNOG" id="COG0540">
    <property type="taxonomic scope" value="Bacteria"/>
</dbReference>
<dbReference type="HOGENOM" id="CLU_043846_2_0_7"/>
<dbReference type="OrthoDB" id="9774690at2"/>
<dbReference type="UniPathway" id="UPA00070">
    <property type="reaction ID" value="UER00116"/>
</dbReference>
<dbReference type="Proteomes" id="UP000006382">
    <property type="component" value="Chromosome"/>
</dbReference>
<dbReference type="GO" id="GO:0005829">
    <property type="term" value="C:cytosol"/>
    <property type="evidence" value="ECO:0007669"/>
    <property type="project" value="TreeGrafter"/>
</dbReference>
<dbReference type="GO" id="GO:0016597">
    <property type="term" value="F:amino acid binding"/>
    <property type="evidence" value="ECO:0007669"/>
    <property type="project" value="InterPro"/>
</dbReference>
<dbReference type="GO" id="GO:0004070">
    <property type="term" value="F:aspartate carbamoyltransferase activity"/>
    <property type="evidence" value="ECO:0007669"/>
    <property type="project" value="UniProtKB-UniRule"/>
</dbReference>
<dbReference type="GO" id="GO:0006207">
    <property type="term" value="P:'de novo' pyrimidine nucleobase biosynthetic process"/>
    <property type="evidence" value="ECO:0007669"/>
    <property type="project" value="InterPro"/>
</dbReference>
<dbReference type="GO" id="GO:0044205">
    <property type="term" value="P:'de novo' UMP biosynthetic process"/>
    <property type="evidence" value="ECO:0007669"/>
    <property type="project" value="UniProtKB-UniRule"/>
</dbReference>
<dbReference type="GO" id="GO:0006520">
    <property type="term" value="P:amino acid metabolic process"/>
    <property type="evidence" value="ECO:0007669"/>
    <property type="project" value="InterPro"/>
</dbReference>
<dbReference type="Gene3D" id="3.40.50.1370">
    <property type="entry name" value="Aspartate/ornithine carbamoyltransferase"/>
    <property type="match status" value="2"/>
</dbReference>
<dbReference type="HAMAP" id="MF_00001">
    <property type="entry name" value="Asp_carb_tr"/>
    <property type="match status" value="1"/>
</dbReference>
<dbReference type="InterPro" id="IPR006132">
    <property type="entry name" value="Asp/Orn_carbamoyltranf_P-bd"/>
</dbReference>
<dbReference type="InterPro" id="IPR006130">
    <property type="entry name" value="Asp/Orn_carbamoylTrfase"/>
</dbReference>
<dbReference type="InterPro" id="IPR036901">
    <property type="entry name" value="Asp/Orn_carbamoylTrfase_sf"/>
</dbReference>
<dbReference type="InterPro" id="IPR002082">
    <property type="entry name" value="Asp_carbamoyltransf"/>
</dbReference>
<dbReference type="InterPro" id="IPR006131">
    <property type="entry name" value="Asp_carbamoyltransf_Asp/Orn-bd"/>
</dbReference>
<dbReference type="NCBIfam" id="TIGR00670">
    <property type="entry name" value="asp_carb_tr"/>
    <property type="match status" value="1"/>
</dbReference>
<dbReference type="NCBIfam" id="NF002032">
    <property type="entry name" value="PRK00856.1"/>
    <property type="match status" value="1"/>
</dbReference>
<dbReference type="PANTHER" id="PTHR45753:SF6">
    <property type="entry name" value="ASPARTATE CARBAMOYLTRANSFERASE"/>
    <property type="match status" value="1"/>
</dbReference>
<dbReference type="PANTHER" id="PTHR45753">
    <property type="entry name" value="ORNITHINE CARBAMOYLTRANSFERASE, MITOCHONDRIAL"/>
    <property type="match status" value="1"/>
</dbReference>
<dbReference type="Pfam" id="PF00185">
    <property type="entry name" value="OTCace"/>
    <property type="match status" value="1"/>
</dbReference>
<dbReference type="Pfam" id="PF02729">
    <property type="entry name" value="OTCace_N"/>
    <property type="match status" value="1"/>
</dbReference>
<dbReference type="PRINTS" id="PR00100">
    <property type="entry name" value="AOTCASE"/>
</dbReference>
<dbReference type="PRINTS" id="PR00101">
    <property type="entry name" value="ATCASE"/>
</dbReference>
<dbReference type="SUPFAM" id="SSF53671">
    <property type="entry name" value="Aspartate/ornithine carbamoyltransferase"/>
    <property type="match status" value="1"/>
</dbReference>
<dbReference type="PROSITE" id="PS00097">
    <property type="entry name" value="CARBAMOYLTRANSFERASE"/>
    <property type="match status" value="1"/>
</dbReference>
<feature type="chain" id="PRO_0000321071" description="Aspartate carbamoyltransferase catalytic subunit">
    <location>
        <begin position="1"/>
        <end position="316"/>
    </location>
</feature>
<feature type="binding site" evidence="1">
    <location>
        <position position="58"/>
    </location>
    <ligand>
        <name>carbamoyl phosphate</name>
        <dbReference type="ChEBI" id="CHEBI:58228"/>
    </ligand>
</feature>
<feature type="binding site" evidence="1">
    <location>
        <position position="59"/>
    </location>
    <ligand>
        <name>carbamoyl phosphate</name>
        <dbReference type="ChEBI" id="CHEBI:58228"/>
    </ligand>
</feature>
<feature type="binding site" evidence="1">
    <location>
        <position position="86"/>
    </location>
    <ligand>
        <name>L-aspartate</name>
        <dbReference type="ChEBI" id="CHEBI:29991"/>
    </ligand>
</feature>
<feature type="binding site" evidence="1">
    <location>
        <position position="108"/>
    </location>
    <ligand>
        <name>carbamoyl phosphate</name>
        <dbReference type="ChEBI" id="CHEBI:58228"/>
    </ligand>
</feature>
<feature type="binding site" evidence="1">
    <location>
        <position position="136"/>
    </location>
    <ligand>
        <name>carbamoyl phosphate</name>
        <dbReference type="ChEBI" id="CHEBI:58228"/>
    </ligand>
</feature>
<feature type="binding site" evidence="1">
    <location>
        <position position="139"/>
    </location>
    <ligand>
        <name>carbamoyl phosphate</name>
        <dbReference type="ChEBI" id="CHEBI:58228"/>
    </ligand>
</feature>
<feature type="binding site" evidence="1">
    <location>
        <position position="169"/>
    </location>
    <ligand>
        <name>L-aspartate</name>
        <dbReference type="ChEBI" id="CHEBI:29991"/>
    </ligand>
</feature>
<feature type="binding site" evidence="1">
    <location>
        <position position="223"/>
    </location>
    <ligand>
        <name>L-aspartate</name>
        <dbReference type="ChEBI" id="CHEBI:29991"/>
    </ligand>
</feature>
<feature type="binding site" evidence="1">
    <location>
        <position position="265"/>
    </location>
    <ligand>
        <name>carbamoyl phosphate</name>
        <dbReference type="ChEBI" id="CHEBI:58228"/>
    </ligand>
</feature>
<feature type="binding site" evidence="1">
    <location>
        <position position="266"/>
    </location>
    <ligand>
        <name>carbamoyl phosphate</name>
        <dbReference type="ChEBI" id="CHEBI:58228"/>
    </ligand>
</feature>
<keyword id="KW-0665">Pyrimidine biosynthesis</keyword>
<keyword id="KW-1185">Reference proteome</keyword>
<keyword id="KW-0808">Transferase</keyword>
<accession>A7HCE9</accession>
<protein>
    <recommendedName>
        <fullName evidence="1">Aspartate carbamoyltransferase catalytic subunit</fullName>
        <ecNumber evidence="1">2.1.3.2</ecNumber>
    </recommendedName>
    <alternativeName>
        <fullName evidence="1">Aspartate transcarbamylase</fullName>
        <shortName evidence="1">ATCase</shortName>
    </alternativeName>
</protein>
<reference key="1">
    <citation type="journal article" date="2015" name="Genome Announc.">
        <title>Complete genome sequence of Anaeromyxobacter sp. Fw109-5, an anaerobic, metal-reducing bacterium isolated from a contaminated subsurface environment.</title>
        <authorList>
            <person name="Hwang C."/>
            <person name="Copeland A."/>
            <person name="Lucas S."/>
            <person name="Lapidus A."/>
            <person name="Barry K."/>
            <person name="Glavina Del Rio T."/>
            <person name="Dalin E."/>
            <person name="Tice H."/>
            <person name="Pitluck S."/>
            <person name="Sims D."/>
            <person name="Brettin T."/>
            <person name="Bruce D.C."/>
            <person name="Detter J.C."/>
            <person name="Han C.S."/>
            <person name="Schmutz J."/>
            <person name="Larimer F.W."/>
            <person name="Land M.L."/>
            <person name="Hauser L.J."/>
            <person name="Kyrpides N."/>
            <person name="Lykidis A."/>
            <person name="Richardson P."/>
            <person name="Belieav A."/>
            <person name="Sanford R.A."/>
            <person name="Loeffler F.E."/>
            <person name="Fields M.W."/>
        </authorList>
    </citation>
    <scope>NUCLEOTIDE SEQUENCE [LARGE SCALE GENOMIC DNA]</scope>
    <source>
        <strain>Fw109-5</strain>
    </source>
</reference>
<proteinExistence type="inferred from homology"/>
<sequence>MIGRHKHCISLAEYSREEILEVLDLAVSMKEVLQRPIKKVPSLRGKSVVNLFFEASTRTRSSFEIAAKVLSADALNWTASASSVTKGETLVDTARNLEAMRPDVLVIRHSAGGAPRLVAEHVGCSVVSAGDGAHEHPSQGLLDCFTLREKLGTLEGKTIAIVGDISHSRVARSDLHAMTKLGARVRLCGPPTMIPAGIEALGATVRTQLREAVEGADAVVMLRIQHERIGDPLIPGTREYSKLWGLNAKKAAEWLRPECVILHPGPINRGVELSPEVADGPQSVILDQVQNGVAVRMAILYLLAGGNPADAGEAKA</sequence>
<comment type="function">
    <text evidence="1">Catalyzes the condensation of carbamoyl phosphate and aspartate to form carbamoyl aspartate and inorganic phosphate, the committed step in the de novo pyrimidine nucleotide biosynthesis pathway.</text>
</comment>
<comment type="catalytic activity">
    <reaction evidence="1">
        <text>carbamoyl phosphate + L-aspartate = N-carbamoyl-L-aspartate + phosphate + H(+)</text>
        <dbReference type="Rhea" id="RHEA:20013"/>
        <dbReference type="ChEBI" id="CHEBI:15378"/>
        <dbReference type="ChEBI" id="CHEBI:29991"/>
        <dbReference type="ChEBI" id="CHEBI:32814"/>
        <dbReference type="ChEBI" id="CHEBI:43474"/>
        <dbReference type="ChEBI" id="CHEBI:58228"/>
        <dbReference type="EC" id="2.1.3.2"/>
    </reaction>
</comment>
<comment type="pathway">
    <text evidence="1">Pyrimidine metabolism; UMP biosynthesis via de novo pathway; (S)-dihydroorotate from bicarbonate: step 2/3.</text>
</comment>
<comment type="subunit">
    <text evidence="1">Heterododecamer (2C3:3R2) of six catalytic PyrB chains organized as two trimers (C3), and six regulatory PyrI chains organized as three dimers (R2).</text>
</comment>
<comment type="similarity">
    <text evidence="1">Belongs to the aspartate/ornithine carbamoyltransferase superfamily. ATCase family.</text>
</comment>
<evidence type="ECO:0000255" key="1">
    <source>
        <dbReference type="HAMAP-Rule" id="MF_00001"/>
    </source>
</evidence>
<organism>
    <name type="scientific">Anaeromyxobacter sp. (strain Fw109-5)</name>
    <dbReference type="NCBI Taxonomy" id="404589"/>
    <lineage>
        <taxon>Bacteria</taxon>
        <taxon>Pseudomonadati</taxon>
        <taxon>Myxococcota</taxon>
        <taxon>Myxococcia</taxon>
        <taxon>Myxococcales</taxon>
        <taxon>Cystobacterineae</taxon>
        <taxon>Anaeromyxobacteraceae</taxon>
        <taxon>Anaeromyxobacter</taxon>
    </lineage>
</organism>
<name>PYRB_ANADF</name>